<evidence type="ECO:0000255" key="1">
    <source>
        <dbReference type="HAMAP-Rule" id="MF_02091"/>
    </source>
</evidence>
<comment type="subcellular location">
    <subcellularLocation>
        <location evidence="1">Cell inner membrane</location>
        <topology evidence="1">Multi-pass membrane protein</topology>
    </subcellularLocation>
</comment>
<comment type="similarity">
    <text evidence="1">Belongs to the major facilitator superfamily. YfcJ family.</text>
</comment>
<organism>
    <name type="scientific">Salmonella newport (strain SL254)</name>
    <dbReference type="NCBI Taxonomy" id="423368"/>
    <lineage>
        <taxon>Bacteria</taxon>
        <taxon>Pseudomonadati</taxon>
        <taxon>Pseudomonadota</taxon>
        <taxon>Gammaproteobacteria</taxon>
        <taxon>Enterobacterales</taxon>
        <taxon>Enterobacteriaceae</taxon>
        <taxon>Salmonella</taxon>
    </lineage>
</organism>
<gene>
    <name evidence="1" type="primary">yfcJ</name>
    <name type="ordered locus">SNSL254_A2561</name>
</gene>
<protein>
    <recommendedName>
        <fullName evidence="1">Uncharacterized MFS-type transporter YfcJ</fullName>
    </recommendedName>
</protein>
<accession>B4SZP4</accession>
<proteinExistence type="inferred from homology"/>
<name>YFCJ_SALNS</name>
<reference key="1">
    <citation type="journal article" date="2011" name="J. Bacteriol.">
        <title>Comparative genomics of 28 Salmonella enterica isolates: evidence for CRISPR-mediated adaptive sublineage evolution.</title>
        <authorList>
            <person name="Fricke W.F."/>
            <person name="Mammel M.K."/>
            <person name="McDermott P.F."/>
            <person name="Tartera C."/>
            <person name="White D.G."/>
            <person name="Leclerc J.E."/>
            <person name="Ravel J."/>
            <person name="Cebula T.A."/>
        </authorList>
    </citation>
    <scope>NUCLEOTIDE SEQUENCE [LARGE SCALE GENOMIC DNA]</scope>
    <source>
        <strain>SL254</strain>
    </source>
</reference>
<feature type="chain" id="PRO_1000137236" description="Uncharacterized MFS-type transporter YfcJ">
    <location>
        <begin position="1"/>
        <end position="392"/>
    </location>
</feature>
<feature type="transmembrane region" description="Helical" evidence="1">
    <location>
        <begin position="22"/>
        <end position="42"/>
    </location>
</feature>
<feature type="transmembrane region" description="Helical" evidence="1">
    <location>
        <begin position="46"/>
        <end position="66"/>
    </location>
</feature>
<feature type="transmembrane region" description="Helical" evidence="1">
    <location>
        <begin position="97"/>
        <end position="117"/>
    </location>
</feature>
<feature type="transmembrane region" description="Helical" evidence="1">
    <location>
        <begin position="121"/>
        <end position="141"/>
    </location>
</feature>
<feature type="transmembrane region" description="Helical" evidence="1">
    <location>
        <begin position="151"/>
        <end position="171"/>
    </location>
</feature>
<feature type="transmembrane region" description="Helical" evidence="1">
    <location>
        <begin position="174"/>
        <end position="194"/>
    </location>
</feature>
<feature type="transmembrane region" description="Helical" evidence="1">
    <location>
        <begin position="224"/>
        <end position="244"/>
    </location>
</feature>
<feature type="transmembrane region" description="Helical" evidence="1">
    <location>
        <begin position="252"/>
        <end position="272"/>
    </location>
</feature>
<feature type="transmembrane region" description="Helical" evidence="1">
    <location>
        <begin position="276"/>
        <end position="298"/>
    </location>
</feature>
<feature type="transmembrane region" description="Helical" evidence="1">
    <location>
        <begin position="342"/>
        <end position="362"/>
    </location>
</feature>
<feature type="transmembrane region" description="Helical" evidence="1">
    <location>
        <begin position="369"/>
        <end position="389"/>
    </location>
</feature>
<sequence length="392" mass="40695">MTAVSQKTTTPSANFSLFRIAFAVFLTYMTVGLPLPVIPLFVHHELGYSNTMVGIAVGIQFFATVLTRGYAGRLADQYGAKRSALQGMLACGLAGAAWLLAALLPVSAPVKFALLIVGRLILGFGESQLLTGTLTWGLGLVGPTRSGKVMSWNGMAIYGALAAGAPLGLLIHSHFGFAALAGTTMVLPLLAWAFNGTVRKVPAYTGERPSLWSVVGLIWKPGLGLALQGVGFAVIGTFISLYFVSNGWTMAGFTLTAFGGAFVLMRILFGWMPDRFGGVKVAVVSLLVETAGLLLLWLAPTAWIALVGAALTGAGCSLIFPALGVEVVKRVPAQVRGTALGGYAAFQDISYGVTGPLAGMLATSCGYPSVFLAGAISAVVGILVTILSFRRG</sequence>
<keyword id="KW-0997">Cell inner membrane</keyword>
<keyword id="KW-1003">Cell membrane</keyword>
<keyword id="KW-0472">Membrane</keyword>
<keyword id="KW-0812">Transmembrane</keyword>
<keyword id="KW-1133">Transmembrane helix</keyword>
<keyword id="KW-0813">Transport</keyword>
<dbReference type="EMBL" id="CP001113">
    <property type="protein sequence ID" value="ACF65215.1"/>
    <property type="molecule type" value="Genomic_DNA"/>
</dbReference>
<dbReference type="RefSeq" id="WP_000127733.1">
    <property type="nucleotide sequence ID" value="NZ_CCMR01000001.1"/>
</dbReference>
<dbReference type="SMR" id="B4SZP4"/>
<dbReference type="KEGG" id="see:SNSL254_A2561"/>
<dbReference type="HOGENOM" id="CLU_001265_10_3_6"/>
<dbReference type="Proteomes" id="UP000008824">
    <property type="component" value="Chromosome"/>
</dbReference>
<dbReference type="GO" id="GO:0005886">
    <property type="term" value="C:plasma membrane"/>
    <property type="evidence" value="ECO:0007669"/>
    <property type="project" value="UniProtKB-SubCell"/>
</dbReference>
<dbReference type="GO" id="GO:0022857">
    <property type="term" value="F:transmembrane transporter activity"/>
    <property type="evidence" value="ECO:0007669"/>
    <property type="project" value="UniProtKB-UniRule"/>
</dbReference>
<dbReference type="CDD" id="cd17489">
    <property type="entry name" value="MFS_YfcJ_like"/>
    <property type="match status" value="1"/>
</dbReference>
<dbReference type="Gene3D" id="1.20.1250.20">
    <property type="entry name" value="MFS general substrate transporter like domains"/>
    <property type="match status" value="1"/>
</dbReference>
<dbReference type="HAMAP" id="MF_02091">
    <property type="entry name" value="MFS_YfcJ"/>
    <property type="match status" value="1"/>
</dbReference>
<dbReference type="InterPro" id="IPR011701">
    <property type="entry name" value="MFS"/>
</dbReference>
<dbReference type="InterPro" id="IPR020846">
    <property type="entry name" value="MFS_dom"/>
</dbReference>
<dbReference type="InterPro" id="IPR036259">
    <property type="entry name" value="MFS_trans_sf"/>
</dbReference>
<dbReference type="InterPro" id="IPR050171">
    <property type="entry name" value="MFS_Transporters"/>
</dbReference>
<dbReference type="InterPro" id="IPR037541">
    <property type="entry name" value="MFS_YfcJ"/>
</dbReference>
<dbReference type="NCBIfam" id="NF003477">
    <property type="entry name" value="PRK05122.1"/>
    <property type="match status" value="1"/>
</dbReference>
<dbReference type="NCBIfam" id="NF009048">
    <property type="entry name" value="PRK12382.1"/>
    <property type="match status" value="1"/>
</dbReference>
<dbReference type="PANTHER" id="PTHR23517:SF1">
    <property type="match status" value="1"/>
</dbReference>
<dbReference type="PANTHER" id="PTHR23517">
    <property type="entry name" value="RESISTANCE PROTEIN MDTM, PUTATIVE-RELATED-RELATED"/>
    <property type="match status" value="1"/>
</dbReference>
<dbReference type="Pfam" id="PF07690">
    <property type="entry name" value="MFS_1"/>
    <property type="match status" value="1"/>
</dbReference>
<dbReference type="SUPFAM" id="SSF103473">
    <property type="entry name" value="MFS general substrate transporter"/>
    <property type="match status" value="1"/>
</dbReference>
<dbReference type="PROSITE" id="PS50850">
    <property type="entry name" value="MFS"/>
    <property type="match status" value="1"/>
</dbReference>